<accession>P0AB39</accession>
<accession>P75947</accession>
<accession>Q9R424</accession>
<organism>
    <name type="scientific">Escherichia coli O157:H7</name>
    <dbReference type="NCBI Taxonomy" id="83334"/>
    <lineage>
        <taxon>Bacteria</taxon>
        <taxon>Pseudomonadati</taxon>
        <taxon>Pseudomonadota</taxon>
        <taxon>Gammaproteobacteria</taxon>
        <taxon>Enterobacterales</taxon>
        <taxon>Enterobacteriaceae</taxon>
        <taxon>Escherichia</taxon>
    </lineage>
</organism>
<reference key="1">
    <citation type="journal article" date="2001" name="Nature">
        <title>Genome sequence of enterohaemorrhagic Escherichia coli O157:H7.</title>
        <authorList>
            <person name="Perna N.T."/>
            <person name="Plunkett G. III"/>
            <person name="Burland V."/>
            <person name="Mau B."/>
            <person name="Glasner J.D."/>
            <person name="Rose D.J."/>
            <person name="Mayhew G.F."/>
            <person name="Evans P.S."/>
            <person name="Gregor J."/>
            <person name="Kirkpatrick H.A."/>
            <person name="Posfai G."/>
            <person name="Hackett J."/>
            <person name="Klink S."/>
            <person name="Boutin A."/>
            <person name="Shao Y."/>
            <person name="Miller L."/>
            <person name="Grotbeck E.J."/>
            <person name="Davis N.W."/>
            <person name="Lim A."/>
            <person name="Dimalanta E.T."/>
            <person name="Potamousis K."/>
            <person name="Apodaca J."/>
            <person name="Anantharaman T.S."/>
            <person name="Lin J."/>
            <person name="Yen G."/>
            <person name="Schwartz D.C."/>
            <person name="Welch R.A."/>
            <person name="Blattner F.R."/>
        </authorList>
    </citation>
    <scope>NUCLEOTIDE SEQUENCE [LARGE SCALE GENOMIC DNA]</scope>
    <source>
        <strain>O157:H7 / EDL933 / ATCC 700927 / EHEC</strain>
    </source>
</reference>
<reference key="2">
    <citation type="journal article" date="2001" name="DNA Res.">
        <title>Complete genome sequence of enterohemorrhagic Escherichia coli O157:H7 and genomic comparison with a laboratory strain K-12.</title>
        <authorList>
            <person name="Hayashi T."/>
            <person name="Makino K."/>
            <person name="Ohnishi M."/>
            <person name="Kurokawa K."/>
            <person name="Ishii K."/>
            <person name="Yokoyama K."/>
            <person name="Han C.-G."/>
            <person name="Ohtsubo E."/>
            <person name="Nakayama K."/>
            <person name="Murata T."/>
            <person name="Tanaka M."/>
            <person name="Tobe T."/>
            <person name="Iida T."/>
            <person name="Takami H."/>
            <person name="Honda T."/>
            <person name="Sasakawa C."/>
            <person name="Ogasawara N."/>
            <person name="Yasunaga T."/>
            <person name="Kuhara S."/>
            <person name="Shiba T."/>
            <person name="Hattori M."/>
            <person name="Shinagawa H."/>
        </authorList>
    </citation>
    <scope>NUCLEOTIDE SEQUENCE [LARGE SCALE GENOMIC DNA]</scope>
    <source>
        <strain>O157:H7 / Sakai / RIMD 0509952 / EHEC</strain>
    </source>
</reference>
<protein>
    <recommendedName>
        <fullName evidence="1">Penicillin-binding protein activator LpoB</fullName>
        <shortName evidence="1">PBP activator LpoB</shortName>
    </recommendedName>
</protein>
<comment type="function">
    <text evidence="1">Regulator of peptidoglycan synthesis that is essential for the function of penicillin-binding protein 1B (PBP1b).</text>
</comment>
<comment type="subunit">
    <text evidence="1">Interacts with PBP1b.</text>
</comment>
<comment type="subcellular location">
    <subcellularLocation>
        <location evidence="1">Cell outer membrane</location>
        <topology evidence="1">Lipid-anchor</topology>
        <orientation evidence="1">Periplasmic side</orientation>
    </subcellularLocation>
</comment>
<comment type="similarity">
    <text evidence="1">Belongs to the LpoB family.</text>
</comment>
<name>LPOB_ECO57</name>
<sequence>MTKMSRYALITALAMFLAGCVGQREPAPVEEVKPAPEQPAEPQQPVPTVPSVPTIPQQPGPIEHEDQTAPPAPHIRHYDWNGAMQPMVSKMLGADGVTAGSVLLVDSVNNRTNGSLNAAEATETLRNALANNGKFTLVSAQQLSMAKQQLGLSPQDSLGTRSKAIGIARNVGAHYVLYSSASGNVNAPTLQMQLMLVQTGEIIWSGKGAVSQQ</sequence>
<keyword id="KW-0998">Cell outer membrane</keyword>
<keyword id="KW-0133">Cell shape</keyword>
<keyword id="KW-0449">Lipoprotein</keyword>
<keyword id="KW-0472">Membrane</keyword>
<keyword id="KW-0564">Palmitate</keyword>
<keyword id="KW-0573">Peptidoglycan synthesis</keyword>
<keyword id="KW-1185">Reference proteome</keyword>
<keyword id="KW-0732">Signal</keyword>
<dbReference type="EMBL" id="AE005174">
    <property type="protein sequence ID" value="AAG55851.1"/>
    <property type="molecule type" value="Genomic_DNA"/>
</dbReference>
<dbReference type="EMBL" id="BA000007">
    <property type="protein sequence ID" value="BAB34906.1"/>
    <property type="molecule type" value="Genomic_DNA"/>
</dbReference>
<dbReference type="PIR" id="C90814">
    <property type="entry name" value="C90814"/>
</dbReference>
<dbReference type="PIR" id="G85673">
    <property type="entry name" value="G85673"/>
</dbReference>
<dbReference type="RefSeq" id="NP_309510.1">
    <property type="nucleotide sequence ID" value="NC_002695.1"/>
</dbReference>
<dbReference type="RefSeq" id="WP_000164439.1">
    <property type="nucleotide sequence ID" value="NZ_VOAI01000018.1"/>
</dbReference>
<dbReference type="BMRB" id="P0AB39"/>
<dbReference type="SMR" id="P0AB39"/>
<dbReference type="STRING" id="155864.Z1744"/>
<dbReference type="GeneID" id="913505"/>
<dbReference type="GeneID" id="93776303"/>
<dbReference type="KEGG" id="ece:Z1744"/>
<dbReference type="KEGG" id="ecs:ECs_1483"/>
<dbReference type="PATRIC" id="fig|386585.9.peg.1584"/>
<dbReference type="eggNOG" id="COG3417">
    <property type="taxonomic scope" value="Bacteria"/>
</dbReference>
<dbReference type="HOGENOM" id="CLU_092328_0_0_6"/>
<dbReference type="OMA" id="AMQPMVG"/>
<dbReference type="Proteomes" id="UP000000558">
    <property type="component" value="Chromosome"/>
</dbReference>
<dbReference type="Proteomes" id="UP000002519">
    <property type="component" value="Chromosome"/>
</dbReference>
<dbReference type="GO" id="GO:0031241">
    <property type="term" value="C:periplasmic side of cell outer membrane"/>
    <property type="evidence" value="ECO:0007669"/>
    <property type="project" value="UniProtKB-UniRule"/>
</dbReference>
<dbReference type="GO" id="GO:0030234">
    <property type="term" value="F:enzyme regulator activity"/>
    <property type="evidence" value="ECO:0007669"/>
    <property type="project" value="UniProtKB-UniRule"/>
</dbReference>
<dbReference type="GO" id="GO:0009252">
    <property type="term" value="P:peptidoglycan biosynthetic process"/>
    <property type="evidence" value="ECO:0007669"/>
    <property type="project" value="UniProtKB-UniRule"/>
</dbReference>
<dbReference type="GO" id="GO:0008360">
    <property type="term" value="P:regulation of cell shape"/>
    <property type="evidence" value="ECO:0007669"/>
    <property type="project" value="UniProtKB-KW"/>
</dbReference>
<dbReference type="FunFam" id="3.40.50.10610:FF:000002">
    <property type="entry name" value="Penicillin-binding protein activator LpoB"/>
    <property type="match status" value="1"/>
</dbReference>
<dbReference type="Gene3D" id="3.40.50.10610">
    <property type="entry name" value="ABC-type transport auxiliary lipoprotein component"/>
    <property type="match status" value="1"/>
</dbReference>
<dbReference type="HAMAP" id="MF_01889">
    <property type="entry name" value="LpoB"/>
    <property type="match status" value="1"/>
</dbReference>
<dbReference type="InterPro" id="IPR014094">
    <property type="entry name" value="LpoB"/>
</dbReference>
<dbReference type="NCBIfam" id="TIGR02722">
    <property type="entry name" value="lp"/>
    <property type="match status" value="1"/>
</dbReference>
<dbReference type="PANTHER" id="PTHR40593">
    <property type="entry name" value="PENICILLIN-BINDING PROTEIN ACTIVATOR LPOB"/>
    <property type="match status" value="1"/>
</dbReference>
<dbReference type="PANTHER" id="PTHR40593:SF1">
    <property type="entry name" value="PENICILLIN-BINDING PROTEIN ACTIVATOR LPOB"/>
    <property type="match status" value="1"/>
</dbReference>
<dbReference type="Pfam" id="PF13036">
    <property type="entry name" value="LpoB"/>
    <property type="match status" value="1"/>
</dbReference>
<dbReference type="PROSITE" id="PS51257">
    <property type="entry name" value="PROKAR_LIPOPROTEIN"/>
    <property type="match status" value="1"/>
</dbReference>
<feature type="signal peptide" evidence="1">
    <location>
        <begin position="1"/>
        <end position="19"/>
    </location>
</feature>
<feature type="chain" id="PRO_0000168838" description="Penicillin-binding protein activator LpoB">
    <location>
        <begin position="20"/>
        <end position="213"/>
    </location>
</feature>
<feature type="region of interest" description="Disordered" evidence="2">
    <location>
        <begin position="28"/>
        <end position="74"/>
    </location>
</feature>
<feature type="compositionally biased region" description="Pro residues" evidence="2">
    <location>
        <begin position="36"/>
        <end position="50"/>
    </location>
</feature>
<feature type="lipid moiety-binding region" description="N-palmitoyl cysteine" evidence="1">
    <location>
        <position position="20"/>
    </location>
</feature>
<feature type="lipid moiety-binding region" description="S-diacylglycerol cysteine" evidence="1">
    <location>
        <position position="20"/>
    </location>
</feature>
<gene>
    <name evidence="1" type="primary">lpoB</name>
    <name type="ordered locus">Z1744</name>
    <name type="ordered locus">ECs1483</name>
</gene>
<evidence type="ECO:0000255" key="1">
    <source>
        <dbReference type="HAMAP-Rule" id="MF_01889"/>
    </source>
</evidence>
<evidence type="ECO:0000256" key="2">
    <source>
        <dbReference type="SAM" id="MobiDB-lite"/>
    </source>
</evidence>
<proteinExistence type="inferred from homology"/>